<dbReference type="EC" id="2.8.1.13" evidence="1"/>
<dbReference type="EMBL" id="CP000488">
    <property type="protein sequence ID" value="ABL02474.1"/>
    <property type="molecule type" value="Genomic_DNA"/>
</dbReference>
<dbReference type="SMR" id="A1AX17"/>
<dbReference type="STRING" id="413404.Rmag_0747"/>
<dbReference type="KEGG" id="rma:Rmag_0747"/>
<dbReference type="eggNOG" id="COG0482">
    <property type="taxonomic scope" value="Bacteria"/>
</dbReference>
<dbReference type="HOGENOM" id="CLU_035188_1_0_6"/>
<dbReference type="Proteomes" id="UP000002587">
    <property type="component" value="Chromosome"/>
</dbReference>
<dbReference type="GO" id="GO:0005737">
    <property type="term" value="C:cytoplasm"/>
    <property type="evidence" value="ECO:0007669"/>
    <property type="project" value="UniProtKB-SubCell"/>
</dbReference>
<dbReference type="GO" id="GO:0005524">
    <property type="term" value="F:ATP binding"/>
    <property type="evidence" value="ECO:0007669"/>
    <property type="project" value="UniProtKB-KW"/>
</dbReference>
<dbReference type="GO" id="GO:0000049">
    <property type="term" value="F:tRNA binding"/>
    <property type="evidence" value="ECO:0007669"/>
    <property type="project" value="UniProtKB-KW"/>
</dbReference>
<dbReference type="GO" id="GO:0103016">
    <property type="term" value="F:tRNA-uridine 2-sulfurtransferase activity"/>
    <property type="evidence" value="ECO:0007669"/>
    <property type="project" value="UniProtKB-EC"/>
</dbReference>
<dbReference type="GO" id="GO:0002143">
    <property type="term" value="P:tRNA wobble position uridine thiolation"/>
    <property type="evidence" value="ECO:0007669"/>
    <property type="project" value="TreeGrafter"/>
</dbReference>
<dbReference type="CDD" id="cd01998">
    <property type="entry name" value="MnmA_TRMU-like"/>
    <property type="match status" value="1"/>
</dbReference>
<dbReference type="FunFam" id="2.30.30.280:FF:000001">
    <property type="entry name" value="tRNA-specific 2-thiouridylase MnmA"/>
    <property type="match status" value="1"/>
</dbReference>
<dbReference type="FunFam" id="2.40.30.10:FF:000023">
    <property type="entry name" value="tRNA-specific 2-thiouridylase MnmA"/>
    <property type="match status" value="1"/>
</dbReference>
<dbReference type="FunFam" id="3.40.50.620:FF:000004">
    <property type="entry name" value="tRNA-specific 2-thiouridylase MnmA"/>
    <property type="match status" value="1"/>
</dbReference>
<dbReference type="Gene3D" id="2.30.30.280">
    <property type="entry name" value="Adenine nucleotide alpha hydrolases-like domains"/>
    <property type="match status" value="1"/>
</dbReference>
<dbReference type="Gene3D" id="3.40.50.620">
    <property type="entry name" value="HUPs"/>
    <property type="match status" value="1"/>
</dbReference>
<dbReference type="Gene3D" id="2.40.30.10">
    <property type="entry name" value="Translation factors"/>
    <property type="match status" value="1"/>
</dbReference>
<dbReference type="HAMAP" id="MF_00144">
    <property type="entry name" value="tRNA_thiouridyl_MnmA"/>
    <property type="match status" value="1"/>
</dbReference>
<dbReference type="InterPro" id="IPR004506">
    <property type="entry name" value="MnmA-like"/>
</dbReference>
<dbReference type="InterPro" id="IPR046885">
    <property type="entry name" value="MnmA-like_C"/>
</dbReference>
<dbReference type="InterPro" id="IPR046884">
    <property type="entry name" value="MnmA-like_central"/>
</dbReference>
<dbReference type="InterPro" id="IPR023382">
    <property type="entry name" value="MnmA-like_central_sf"/>
</dbReference>
<dbReference type="InterPro" id="IPR014729">
    <property type="entry name" value="Rossmann-like_a/b/a_fold"/>
</dbReference>
<dbReference type="NCBIfam" id="NF001138">
    <property type="entry name" value="PRK00143.1"/>
    <property type="match status" value="1"/>
</dbReference>
<dbReference type="NCBIfam" id="TIGR00420">
    <property type="entry name" value="trmU"/>
    <property type="match status" value="1"/>
</dbReference>
<dbReference type="PANTHER" id="PTHR11933:SF5">
    <property type="entry name" value="MITOCHONDRIAL TRNA-SPECIFIC 2-THIOURIDYLASE 1"/>
    <property type="match status" value="1"/>
</dbReference>
<dbReference type="PANTHER" id="PTHR11933">
    <property type="entry name" value="TRNA 5-METHYLAMINOMETHYL-2-THIOURIDYLATE -METHYLTRANSFERASE"/>
    <property type="match status" value="1"/>
</dbReference>
<dbReference type="Pfam" id="PF03054">
    <property type="entry name" value="tRNA_Me_trans"/>
    <property type="match status" value="1"/>
</dbReference>
<dbReference type="Pfam" id="PF20258">
    <property type="entry name" value="tRNA_Me_trans_C"/>
    <property type="match status" value="1"/>
</dbReference>
<dbReference type="Pfam" id="PF20259">
    <property type="entry name" value="tRNA_Me_trans_M"/>
    <property type="match status" value="1"/>
</dbReference>
<dbReference type="SUPFAM" id="SSF52402">
    <property type="entry name" value="Adenine nucleotide alpha hydrolases-like"/>
    <property type="match status" value="1"/>
</dbReference>
<keyword id="KW-0067">ATP-binding</keyword>
<keyword id="KW-0963">Cytoplasm</keyword>
<keyword id="KW-1015">Disulfide bond</keyword>
<keyword id="KW-0547">Nucleotide-binding</keyword>
<keyword id="KW-0694">RNA-binding</keyword>
<keyword id="KW-0808">Transferase</keyword>
<keyword id="KW-0819">tRNA processing</keyword>
<keyword id="KW-0820">tRNA-binding</keyword>
<name>MNMA_RUTMC</name>
<protein>
    <recommendedName>
        <fullName evidence="1">tRNA-specific 2-thiouridylase MnmA</fullName>
        <ecNumber evidence="1">2.8.1.13</ecNumber>
    </recommendedName>
</protein>
<accession>A1AX17</accession>
<sequence>MKNLNKNTKIIVGLSGGVDSSVATLLLLKQGYQVEALFMKNWEEDDKSGYCSVEQDLSDAQKIADKLDVKLHAVNFSADYWNDVFIHFLKEHKKGRTPNPDVLCNQKIKFRVFLEHALSLGADKIATGHYARIAEKNGTYQLKTGLDDSKDQSYFLHLLNQYQLSKSLFPLGEINKIDVRNIAIENGFVTANKKDSTGICFIGERNFSEFLATYLSKQQGDIVDEQGQFIKHHQGLAFYTIGQRKGLKIGGGFGKSGEPWFVADKCIERNELMIVQGNHALLYHQILSASKPHWISTPPTLPLMCSAKIRYRQQSQSCMISQNDNKQIKVVFKQLQRAITPGQSIVFYDNKTCLGGAIIEFRL</sequence>
<reference key="1">
    <citation type="journal article" date="2007" name="Science">
        <title>The Calyptogena magnifica chemoautotrophic symbiont genome.</title>
        <authorList>
            <person name="Newton I.L.G."/>
            <person name="Woyke T."/>
            <person name="Auchtung T.A."/>
            <person name="Dilly G.F."/>
            <person name="Dutton R.J."/>
            <person name="Fisher M.C."/>
            <person name="Fontanez K.M."/>
            <person name="Lau E."/>
            <person name="Stewart F.J."/>
            <person name="Richardson P.M."/>
            <person name="Barry K.W."/>
            <person name="Saunders E."/>
            <person name="Detter J.C."/>
            <person name="Wu D."/>
            <person name="Eisen J.A."/>
            <person name="Cavanaugh C.M."/>
        </authorList>
    </citation>
    <scope>NUCLEOTIDE SEQUENCE [LARGE SCALE GENOMIC DNA]</scope>
</reference>
<feature type="chain" id="PRO_1000009568" description="tRNA-specific 2-thiouridylase MnmA">
    <location>
        <begin position="1"/>
        <end position="363"/>
    </location>
</feature>
<feature type="region of interest" description="Interaction with target base in tRNA" evidence="1">
    <location>
        <begin position="99"/>
        <end position="101"/>
    </location>
</feature>
<feature type="region of interest" description="Interaction with tRNA" evidence="1">
    <location>
        <begin position="150"/>
        <end position="152"/>
    </location>
</feature>
<feature type="region of interest" description="Interaction with tRNA" evidence="1">
    <location>
        <begin position="310"/>
        <end position="311"/>
    </location>
</feature>
<feature type="active site" description="Nucleophile" evidence="1">
    <location>
        <position position="104"/>
    </location>
</feature>
<feature type="active site" description="Cysteine persulfide intermediate" evidence="1">
    <location>
        <position position="200"/>
    </location>
</feature>
<feature type="binding site" evidence="1">
    <location>
        <begin position="13"/>
        <end position="20"/>
    </location>
    <ligand>
        <name>ATP</name>
        <dbReference type="ChEBI" id="CHEBI:30616"/>
    </ligand>
</feature>
<feature type="binding site" evidence="1">
    <location>
        <position position="39"/>
    </location>
    <ligand>
        <name>ATP</name>
        <dbReference type="ChEBI" id="CHEBI:30616"/>
    </ligand>
</feature>
<feature type="binding site" evidence="1">
    <location>
        <position position="128"/>
    </location>
    <ligand>
        <name>ATP</name>
        <dbReference type="ChEBI" id="CHEBI:30616"/>
    </ligand>
</feature>
<feature type="site" description="Interaction with tRNA" evidence="1">
    <location>
        <position position="129"/>
    </location>
</feature>
<feature type="site" description="Interaction with tRNA" evidence="1">
    <location>
        <position position="343"/>
    </location>
</feature>
<feature type="disulfide bond" description="Alternate" evidence="1">
    <location>
        <begin position="104"/>
        <end position="200"/>
    </location>
</feature>
<organism>
    <name type="scientific">Ruthia magnifica subsp. Calyptogena magnifica</name>
    <dbReference type="NCBI Taxonomy" id="413404"/>
    <lineage>
        <taxon>Bacteria</taxon>
        <taxon>Pseudomonadati</taxon>
        <taxon>Pseudomonadota</taxon>
        <taxon>Gammaproteobacteria</taxon>
        <taxon>Candidatus Pseudothioglobaceae</taxon>
        <taxon>Candidatus Ruthturnera</taxon>
    </lineage>
</organism>
<gene>
    <name evidence="1" type="primary">mnmA</name>
    <name type="synonym">trmU</name>
    <name type="ordered locus">Rmag_0747</name>
</gene>
<evidence type="ECO:0000255" key="1">
    <source>
        <dbReference type="HAMAP-Rule" id="MF_00144"/>
    </source>
</evidence>
<proteinExistence type="inferred from homology"/>
<comment type="function">
    <text evidence="1">Catalyzes the 2-thiolation of uridine at the wobble position (U34) of tRNA, leading to the formation of s(2)U34.</text>
</comment>
<comment type="catalytic activity">
    <reaction evidence="1">
        <text>S-sulfanyl-L-cysteinyl-[protein] + uridine(34) in tRNA + AH2 + ATP = 2-thiouridine(34) in tRNA + L-cysteinyl-[protein] + A + AMP + diphosphate + H(+)</text>
        <dbReference type="Rhea" id="RHEA:47032"/>
        <dbReference type="Rhea" id="RHEA-COMP:10131"/>
        <dbReference type="Rhea" id="RHEA-COMP:11726"/>
        <dbReference type="Rhea" id="RHEA-COMP:11727"/>
        <dbReference type="Rhea" id="RHEA-COMP:11728"/>
        <dbReference type="ChEBI" id="CHEBI:13193"/>
        <dbReference type="ChEBI" id="CHEBI:15378"/>
        <dbReference type="ChEBI" id="CHEBI:17499"/>
        <dbReference type="ChEBI" id="CHEBI:29950"/>
        <dbReference type="ChEBI" id="CHEBI:30616"/>
        <dbReference type="ChEBI" id="CHEBI:33019"/>
        <dbReference type="ChEBI" id="CHEBI:61963"/>
        <dbReference type="ChEBI" id="CHEBI:65315"/>
        <dbReference type="ChEBI" id="CHEBI:87170"/>
        <dbReference type="ChEBI" id="CHEBI:456215"/>
        <dbReference type="EC" id="2.8.1.13"/>
    </reaction>
</comment>
<comment type="subcellular location">
    <subcellularLocation>
        <location evidence="1">Cytoplasm</location>
    </subcellularLocation>
</comment>
<comment type="similarity">
    <text evidence="1">Belongs to the MnmA/TRMU family.</text>
</comment>